<name>CYB_ARCTR</name>
<keyword id="KW-0249">Electron transport</keyword>
<keyword id="KW-0349">Heme</keyword>
<keyword id="KW-0408">Iron</keyword>
<keyword id="KW-0472">Membrane</keyword>
<keyword id="KW-0479">Metal-binding</keyword>
<keyword id="KW-0496">Mitochondrion</keyword>
<keyword id="KW-0999">Mitochondrion inner membrane</keyword>
<keyword id="KW-0679">Respiratory chain</keyword>
<keyword id="KW-0812">Transmembrane</keyword>
<keyword id="KW-1133">Transmembrane helix</keyword>
<keyword id="KW-0813">Transport</keyword>
<keyword id="KW-0830">Ubiquinone</keyword>
<organism>
    <name type="scientific">Arctogalidia trivirgata</name>
    <name type="common">Small-toothed palm civet</name>
    <dbReference type="NCBI Taxonomy" id="94182"/>
    <lineage>
        <taxon>Eukaryota</taxon>
        <taxon>Metazoa</taxon>
        <taxon>Chordata</taxon>
        <taxon>Craniata</taxon>
        <taxon>Vertebrata</taxon>
        <taxon>Euteleostomi</taxon>
        <taxon>Mammalia</taxon>
        <taxon>Eutheria</taxon>
        <taxon>Laurasiatheria</taxon>
        <taxon>Carnivora</taxon>
        <taxon>Feliformia</taxon>
        <taxon>Viverridae</taxon>
        <taxon>Paradoxurinae</taxon>
        <taxon>Arctogalidia</taxon>
    </lineage>
</organism>
<protein>
    <recommendedName>
        <fullName>Cytochrome b</fullName>
    </recommendedName>
    <alternativeName>
        <fullName>Complex III subunit 3</fullName>
    </alternativeName>
    <alternativeName>
        <fullName>Complex III subunit III</fullName>
    </alternativeName>
    <alternativeName>
        <fullName>Cytochrome b-c1 complex subunit 3</fullName>
    </alternativeName>
    <alternativeName>
        <fullName>Ubiquinol-cytochrome-c reductase complex cytochrome b subunit</fullName>
    </alternativeName>
</protein>
<dbReference type="EMBL" id="AF125140">
    <property type="protein sequence ID" value="AAG60331.2"/>
    <property type="molecule type" value="Genomic_DNA"/>
</dbReference>
<dbReference type="SMR" id="Q9B9F9"/>
<dbReference type="GO" id="GO:0005743">
    <property type="term" value="C:mitochondrial inner membrane"/>
    <property type="evidence" value="ECO:0007669"/>
    <property type="project" value="UniProtKB-SubCell"/>
</dbReference>
<dbReference type="GO" id="GO:0045275">
    <property type="term" value="C:respiratory chain complex III"/>
    <property type="evidence" value="ECO:0007669"/>
    <property type="project" value="InterPro"/>
</dbReference>
<dbReference type="GO" id="GO:0046872">
    <property type="term" value="F:metal ion binding"/>
    <property type="evidence" value="ECO:0007669"/>
    <property type="project" value="UniProtKB-KW"/>
</dbReference>
<dbReference type="GO" id="GO:0008121">
    <property type="term" value="F:ubiquinol-cytochrome-c reductase activity"/>
    <property type="evidence" value="ECO:0007669"/>
    <property type="project" value="InterPro"/>
</dbReference>
<dbReference type="GO" id="GO:0006122">
    <property type="term" value="P:mitochondrial electron transport, ubiquinol to cytochrome c"/>
    <property type="evidence" value="ECO:0007669"/>
    <property type="project" value="TreeGrafter"/>
</dbReference>
<dbReference type="CDD" id="cd00290">
    <property type="entry name" value="cytochrome_b_C"/>
    <property type="match status" value="1"/>
</dbReference>
<dbReference type="CDD" id="cd00284">
    <property type="entry name" value="Cytochrome_b_N"/>
    <property type="match status" value="1"/>
</dbReference>
<dbReference type="FunFam" id="1.20.810.10:FF:000002">
    <property type="entry name" value="Cytochrome b"/>
    <property type="match status" value="1"/>
</dbReference>
<dbReference type="Gene3D" id="1.20.810.10">
    <property type="entry name" value="Cytochrome Bc1 Complex, Chain C"/>
    <property type="match status" value="1"/>
</dbReference>
<dbReference type="InterPro" id="IPR005798">
    <property type="entry name" value="Cyt_b/b6_C"/>
</dbReference>
<dbReference type="InterPro" id="IPR036150">
    <property type="entry name" value="Cyt_b/b6_C_sf"/>
</dbReference>
<dbReference type="InterPro" id="IPR005797">
    <property type="entry name" value="Cyt_b/b6_N"/>
</dbReference>
<dbReference type="InterPro" id="IPR027387">
    <property type="entry name" value="Cytb/b6-like_sf"/>
</dbReference>
<dbReference type="InterPro" id="IPR030689">
    <property type="entry name" value="Cytochrome_b"/>
</dbReference>
<dbReference type="InterPro" id="IPR048260">
    <property type="entry name" value="Cytochrome_b_C_euk/bac"/>
</dbReference>
<dbReference type="InterPro" id="IPR048259">
    <property type="entry name" value="Cytochrome_b_N_euk/bac"/>
</dbReference>
<dbReference type="InterPro" id="IPR016174">
    <property type="entry name" value="Di-haem_cyt_TM"/>
</dbReference>
<dbReference type="PANTHER" id="PTHR19271">
    <property type="entry name" value="CYTOCHROME B"/>
    <property type="match status" value="1"/>
</dbReference>
<dbReference type="PANTHER" id="PTHR19271:SF16">
    <property type="entry name" value="CYTOCHROME B"/>
    <property type="match status" value="1"/>
</dbReference>
<dbReference type="Pfam" id="PF00032">
    <property type="entry name" value="Cytochrom_B_C"/>
    <property type="match status" value="1"/>
</dbReference>
<dbReference type="Pfam" id="PF00033">
    <property type="entry name" value="Cytochrome_B"/>
    <property type="match status" value="1"/>
</dbReference>
<dbReference type="PIRSF" id="PIRSF038885">
    <property type="entry name" value="COB"/>
    <property type="match status" value="1"/>
</dbReference>
<dbReference type="SUPFAM" id="SSF81648">
    <property type="entry name" value="a domain/subunit of cytochrome bc1 complex (Ubiquinol-cytochrome c reductase)"/>
    <property type="match status" value="1"/>
</dbReference>
<dbReference type="SUPFAM" id="SSF81342">
    <property type="entry name" value="Transmembrane di-heme cytochromes"/>
    <property type="match status" value="1"/>
</dbReference>
<dbReference type="PROSITE" id="PS51003">
    <property type="entry name" value="CYTB_CTER"/>
    <property type="match status" value="1"/>
</dbReference>
<dbReference type="PROSITE" id="PS51002">
    <property type="entry name" value="CYTB_NTER"/>
    <property type="match status" value="1"/>
</dbReference>
<geneLocation type="mitochondrion"/>
<sequence length="379" mass="42829">MTNIPKSHPLVKIVNESFIDLPAPSNISAWWNFGSLLGICLILQILTGLFLAMHYTSDTTTAFSSVTHICRDVNYGWIIRYMHANGASMFFICLFMHVGRGMYYGSYTFLETWNIGILLLFTVMATAFMGYVLPWGQMSFWGATVITNLLSAIPYIGTDLVEWIWGGFSVDKATLTRFFAFHFILPFIISALAVVHLLFLHETGSNNPSGLTSDSDKIPFHPYYMIKDILGILLLILMLLLLVLFSPDLLGDPDNYTPANPLNTPPHIKPEWYFLFAYAILRSIPNKLGGVLALILSILILAIIPLLHTSKQRSMMFRPFSQCLFWLLVADLLILTWIGGQPVEYPFITIGQLASILYFSILLILMPISSIIENHFLKW</sequence>
<gene>
    <name type="primary">MT-CYB</name>
    <name type="synonym">COB</name>
    <name type="synonym">CYTB</name>
    <name type="synonym">MTCYB</name>
</gene>
<feature type="chain" id="PRO_0000060620" description="Cytochrome b">
    <location>
        <begin position="1"/>
        <end position="379"/>
    </location>
</feature>
<feature type="transmembrane region" description="Helical" evidence="2">
    <location>
        <begin position="33"/>
        <end position="53"/>
    </location>
</feature>
<feature type="transmembrane region" description="Helical" evidence="2">
    <location>
        <begin position="77"/>
        <end position="98"/>
    </location>
</feature>
<feature type="transmembrane region" description="Helical" evidence="2">
    <location>
        <begin position="113"/>
        <end position="133"/>
    </location>
</feature>
<feature type="transmembrane region" description="Helical" evidence="2">
    <location>
        <begin position="178"/>
        <end position="198"/>
    </location>
</feature>
<feature type="transmembrane region" description="Helical" evidence="2">
    <location>
        <begin position="226"/>
        <end position="246"/>
    </location>
</feature>
<feature type="transmembrane region" description="Helical" evidence="2">
    <location>
        <begin position="288"/>
        <end position="308"/>
    </location>
</feature>
<feature type="transmembrane region" description="Helical" evidence="2">
    <location>
        <begin position="320"/>
        <end position="340"/>
    </location>
</feature>
<feature type="transmembrane region" description="Helical" evidence="2">
    <location>
        <begin position="347"/>
        <end position="367"/>
    </location>
</feature>
<feature type="binding site" description="axial binding residue" evidence="2">
    <location>
        <position position="83"/>
    </location>
    <ligand>
        <name>heme b</name>
        <dbReference type="ChEBI" id="CHEBI:60344"/>
        <label>b562</label>
    </ligand>
    <ligandPart>
        <name>Fe</name>
        <dbReference type="ChEBI" id="CHEBI:18248"/>
    </ligandPart>
</feature>
<feature type="binding site" description="axial binding residue" evidence="2">
    <location>
        <position position="97"/>
    </location>
    <ligand>
        <name>heme b</name>
        <dbReference type="ChEBI" id="CHEBI:60344"/>
        <label>b566</label>
    </ligand>
    <ligandPart>
        <name>Fe</name>
        <dbReference type="ChEBI" id="CHEBI:18248"/>
    </ligandPart>
</feature>
<feature type="binding site" description="axial binding residue" evidence="2">
    <location>
        <position position="182"/>
    </location>
    <ligand>
        <name>heme b</name>
        <dbReference type="ChEBI" id="CHEBI:60344"/>
        <label>b562</label>
    </ligand>
    <ligandPart>
        <name>Fe</name>
        <dbReference type="ChEBI" id="CHEBI:18248"/>
    </ligandPart>
</feature>
<feature type="binding site" description="axial binding residue" evidence="2">
    <location>
        <position position="196"/>
    </location>
    <ligand>
        <name>heme b</name>
        <dbReference type="ChEBI" id="CHEBI:60344"/>
        <label>b566</label>
    </ligand>
    <ligandPart>
        <name>Fe</name>
        <dbReference type="ChEBI" id="CHEBI:18248"/>
    </ligandPart>
</feature>
<feature type="binding site" evidence="2">
    <location>
        <position position="201"/>
    </location>
    <ligand>
        <name>a ubiquinone</name>
        <dbReference type="ChEBI" id="CHEBI:16389"/>
    </ligand>
</feature>
<evidence type="ECO:0000250" key="1"/>
<evidence type="ECO:0000250" key="2">
    <source>
        <dbReference type="UniProtKB" id="P00157"/>
    </source>
</evidence>
<evidence type="ECO:0000255" key="3">
    <source>
        <dbReference type="PROSITE-ProRule" id="PRU00967"/>
    </source>
</evidence>
<evidence type="ECO:0000255" key="4">
    <source>
        <dbReference type="PROSITE-ProRule" id="PRU00968"/>
    </source>
</evidence>
<proteinExistence type="inferred from homology"/>
<comment type="function">
    <text evidence="2">Component of the ubiquinol-cytochrome c reductase complex (complex III or cytochrome b-c1 complex) that is part of the mitochondrial respiratory chain. The b-c1 complex mediates electron transfer from ubiquinol to cytochrome c. Contributes to the generation of a proton gradient across the mitochondrial membrane that is then used for ATP synthesis.</text>
</comment>
<comment type="cofactor">
    <cofactor evidence="2">
        <name>heme b</name>
        <dbReference type="ChEBI" id="CHEBI:60344"/>
    </cofactor>
    <text evidence="2">Binds 2 heme b groups non-covalently.</text>
</comment>
<comment type="subunit">
    <text evidence="2">The cytochrome bc1 complex contains 11 subunits: 3 respiratory subunits (MT-CYB, CYC1 and UQCRFS1), 2 core proteins (UQCRC1 and UQCRC2) and 6 low-molecular weight proteins (UQCRH/QCR6, UQCRB/QCR7, UQCRQ/QCR8, UQCR10/QCR9, UQCR11/QCR10 and a cleavage product of UQCRFS1). This cytochrome bc1 complex then forms a dimer.</text>
</comment>
<comment type="subcellular location">
    <subcellularLocation>
        <location evidence="2">Mitochondrion inner membrane</location>
        <topology evidence="2">Multi-pass membrane protein</topology>
    </subcellularLocation>
</comment>
<comment type="miscellaneous">
    <text evidence="1">Heme 1 (or BL or b562) is low-potential and absorbs at about 562 nm, and heme 2 (or BH or b566) is high-potential and absorbs at about 566 nm.</text>
</comment>
<comment type="similarity">
    <text evidence="3 4">Belongs to the cytochrome b family.</text>
</comment>
<comment type="caution">
    <text evidence="2">The full-length protein contains only eight transmembrane helices, not nine as predicted by bioinformatics tools.</text>
</comment>
<reference key="1">
    <citation type="journal article" date="2004" name="Zool. Scr.">
        <title>First molecular evidence for reassessing phylogenetic affinities between genets (Genetta) and the enigmatic genet-like taxa Osbornictis, Poiana and Prionodon (Carnivora, Viverridae).</title>
        <authorList>
            <person name="Gaubert P."/>
            <person name="Tranier M."/>
            <person name="Delmas A.-S."/>
            <person name="Colyn M."/>
            <person name="Veron G."/>
        </authorList>
    </citation>
    <scope>NUCLEOTIDE SEQUENCE [GENOMIC DNA]</scope>
</reference>
<accession>Q9B9F9</accession>